<feature type="chain" id="PRO_1000045922" description="Nucleoid-associated protein YejK">
    <location>
        <begin position="1"/>
        <end position="335"/>
    </location>
</feature>
<keyword id="KW-0963">Cytoplasm</keyword>
<keyword id="KW-1185">Reference proteome</keyword>
<protein>
    <recommendedName>
        <fullName evidence="1">Nucleoid-associated protein YejK</fullName>
    </recommendedName>
</protein>
<dbReference type="EMBL" id="CP000468">
    <property type="protein sequence ID" value="ABJ01583.1"/>
    <property type="molecule type" value="Genomic_DNA"/>
</dbReference>
<dbReference type="RefSeq" id="WP_000050789.1">
    <property type="nucleotide sequence ID" value="NZ_CADILS010000004.1"/>
</dbReference>
<dbReference type="SMR" id="A1AD43"/>
<dbReference type="GeneID" id="75206440"/>
<dbReference type="KEGG" id="ecv:APECO1_4369"/>
<dbReference type="HOGENOM" id="CLU_063050_0_1_6"/>
<dbReference type="Proteomes" id="UP000008216">
    <property type="component" value="Chromosome"/>
</dbReference>
<dbReference type="GO" id="GO:0043590">
    <property type="term" value="C:bacterial nucleoid"/>
    <property type="evidence" value="ECO:0007669"/>
    <property type="project" value="TreeGrafter"/>
</dbReference>
<dbReference type="GO" id="GO:0005737">
    <property type="term" value="C:cytoplasm"/>
    <property type="evidence" value="ECO:0007669"/>
    <property type="project" value="UniProtKB-UniRule"/>
</dbReference>
<dbReference type="GO" id="GO:0003690">
    <property type="term" value="F:double-stranded DNA binding"/>
    <property type="evidence" value="ECO:0007669"/>
    <property type="project" value="TreeGrafter"/>
</dbReference>
<dbReference type="GO" id="GO:0003727">
    <property type="term" value="F:single-stranded RNA binding"/>
    <property type="evidence" value="ECO:0007669"/>
    <property type="project" value="TreeGrafter"/>
</dbReference>
<dbReference type="HAMAP" id="MF_00730">
    <property type="entry name" value="NdpA"/>
    <property type="match status" value="1"/>
</dbReference>
<dbReference type="InterPro" id="IPR007358">
    <property type="entry name" value="Nucleoid_associated_NdpA"/>
</dbReference>
<dbReference type="NCBIfam" id="NF001557">
    <property type="entry name" value="PRK00378.1"/>
    <property type="match status" value="1"/>
</dbReference>
<dbReference type="PANTHER" id="PTHR38772">
    <property type="match status" value="1"/>
</dbReference>
<dbReference type="PANTHER" id="PTHR38772:SF1">
    <property type="entry name" value="NUCLEOID-ASSOCIATED PROTEIN YEJK"/>
    <property type="match status" value="1"/>
</dbReference>
<dbReference type="Pfam" id="PF04245">
    <property type="entry name" value="NA37"/>
    <property type="match status" value="1"/>
</dbReference>
<proteinExistence type="inferred from homology"/>
<sequence length="335" mass="37823">MSLDINQIALHQLIKRDEQNLELVLRDSLLEPTETVVEMVAELHRVYSAKNKAYGLFSEESELAQTLRLQRQGEEDFLAFSRAATGRLRDELAKYPFADGGFVLFCHYRYLAVEYLLVAVLSNLSSMRVNENLDINPTHYLDINHADIVARIDLTEWETNPESTRYLTFLKGRVGRKVADFFMDFLGASEGLNAKAQNRGLLQAVDDFTAEAQLDKAERQNVRQQVYSYCNEQLQAGEEIELESLSKELAGVSEVSFTEFAAEKGYELEESFPADRSTLRQLTKFAGSGGGLTINFDAMLLGERIFWDPATDTLTIKGTPPNLRDQLQRRTSGGN</sequence>
<evidence type="ECO:0000255" key="1">
    <source>
        <dbReference type="HAMAP-Rule" id="MF_00730"/>
    </source>
</evidence>
<reference key="1">
    <citation type="journal article" date="2007" name="J. Bacteriol.">
        <title>The genome sequence of avian pathogenic Escherichia coli strain O1:K1:H7 shares strong similarities with human extraintestinal pathogenic E. coli genomes.</title>
        <authorList>
            <person name="Johnson T.J."/>
            <person name="Kariyawasam S."/>
            <person name="Wannemuehler Y."/>
            <person name="Mangiamele P."/>
            <person name="Johnson S.J."/>
            <person name="Doetkott C."/>
            <person name="Skyberg J.A."/>
            <person name="Lynne A.M."/>
            <person name="Johnson J.R."/>
            <person name="Nolan L.K."/>
        </authorList>
    </citation>
    <scope>NUCLEOTIDE SEQUENCE [LARGE SCALE GENOMIC DNA]</scope>
</reference>
<name>NDPA_ECOK1</name>
<gene>
    <name evidence="1" type="primary">yejK</name>
    <name type="ordered locus">Ecok1_20890</name>
    <name type="ORF">APECO1_4369</name>
</gene>
<accession>A1AD43</accession>
<organism>
    <name type="scientific">Escherichia coli O1:K1 / APEC</name>
    <dbReference type="NCBI Taxonomy" id="405955"/>
    <lineage>
        <taxon>Bacteria</taxon>
        <taxon>Pseudomonadati</taxon>
        <taxon>Pseudomonadota</taxon>
        <taxon>Gammaproteobacteria</taxon>
        <taxon>Enterobacterales</taxon>
        <taxon>Enterobacteriaceae</taxon>
        <taxon>Escherichia</taxon>
    </lineage>
</organism>
<comment type="subcellular location">
    <subcellularLocation>
        <location evidence="1">Cytoplasm</location>
        <location evidence="1">Nucleoid</location>
    </subcellularLocation>
</comment>
<comment type="similarity">
    <text evidence="1">Belongs to the YejK family.</text>
</comment>